<protein>
    <recommendedName>
        <fullName>Translationally-controlled tumor protein homolog</fullName>
        <shortName>TCTP</shortName>
    </recommendedName>
    <alternativeName>
        <fullName>p23fyp</fullName>
    </alternativeName>
</protein>
<feature type="chain" id="PRO_0000211310" description="Translationally-controlled tumor protein homolog">
    <location>
        <begin position="1"/>
        <end position="168"/>
    </location>
</feature>
<feature type="domain" description="TCTP" evidence="2">
    <location>
        <begin position="1"/>
        <end position="168"/>
    </location>
</feature>
<feature type="modified residue" description="Phosphoserine" evidence="3">
    <location>
        <position position="78"/>
    </location>
</feature>
<feature type="strand" evidence="4">
    <location>
        <begin position="3"/>
        <end position="5"/>
    </location>
</feature>
<feature type="turn" evidence="4">
    <location>
        <begin position="7"/>
        <end position="10"/>
    </location>
</feature>
<feature type="turn" evidence="4">
    <location>
        <begin position="16"/>
        <end position="18"/>
    </location>
</feature>
<feature type="strand" evidence="4">
    <location>
        <begin position="20"/>
        <end position="22"/>
    </location>
</feature>
<feature type="strand" evidence="4">
    <location>
        <begin position="24"/>
        <end position="31"/>
    </location>
</feature>
<feature type="strand" evidence="4">
    <location>
        <begin position="34"/>
        <end position="38"/>
    </location>
</feature>
<feature type="strand" evidence="4">
    <location>
        <begin position="62"/>
        <end position="66"/>
    </location>
</feature>
<feature type="helix" evidence="4">
    <location>
        <begin position="67"/>
        <end position="71"/>
    </location>
</feature>
<feature type="helix" evidence="4">
    <location>
        <begin position="81"/>
        <end position="101"/>
    </location>
</feature>
<feature type="helix" evidence="4">
    <location>
        <begin position="106"/>
        <end position="122"/>
    </location>
</feature>
<feature type="turn" evidence="4">
    <location>
        <begin position="123"/>
        <end position="128"/>
    </location>
</feature>
<feature type="strand" evidence="4">
    <location>
        <begin position="143"/>
        <end position="147"/>
    </location>
</feature>
<feature type="strand" evidence="4">
    <location>
        <begin position="149"/>
        <end position="152"/>
    </location>
</feature>
<feature type="strand" evidence="4">
    <location>
        <begin position="154"/>
        <end position="160"/>
    </location>
</feature>
<feature type="strand" evidence="4">
    <location>
        <begin position="164"/>
        <end position="166"/>
    </location>
</feature>
<reference key="1">
    <citation type="journal article" date="2002" name="Nature">
        <title>The genome sequence of Schizosaccharomyces pombe.</title>
        <authorList>
            <person name="Wood V."/>
            <person name="Gwilliam R."/>
            <person name="Rajandream M.A."/>
            <person name="Lyne M.H."/>
            <person name="Lyne R."/>
            <person name="Stewart A."/>
            <person name="Sgouros J.G."/>
            <person name="Peat N."/>
            <person name="Hayles J."/>
            <person name="Baker S.G."/>
            <person name="Basham D."/>
            <person name="Bowman S."/>
            <person name="Brooks K."/>
            <person name="Brown D."/>
            <person name="Brown S."/>
            <person name="Chillingworth T."/>
            <person name="Churcher C.M."/>
            <person name="Collins M."/>
            <person name="Connor R."/>
            <person name="Cronin A."/>
            <person name="Davis P."/>
            <person name="Feltwell T."/>
            <person name="Fraser A."/>
            <person name="Gentles S."/>
            <person name="Goble A."/>
            <person name="Hamlin N."/>
            <person name="Harris D.E."/>
            <person name="Hidalgo J."/>
            <person name="Hodgson G."/>
            <person name="Holroyd S."/>
            <person name="Hornsby T."/>
            <person name="Howarth S."/>
            <person name="Huckle E.J."/>
            <person name="Hunt S."/>
            <person name="Jagels K."/>
            <person name="James K.D."/>
            <person name="Jones L."/>
            <person name="Jones M."/>
            <person name="Leather S."/>
            <person name="McDonald S."/>
            <person name="McLean J."/>
            <person name="Mooney P."/>
            <person name="Moule S."/>
            <person name="Mungall K.L."/>
            <person name="Murphy L.D."/>
            <person name="Niblett D."/>
            <person name="Odell C."/>
            <person name="Oliver K."/>
            <person name="O'Neil S."/>
            <person name="Pearson D."/>
            <person name="Quail M.A."/>
            <person name="Rabbinowitsch E."/>
            <person name="Rutherford K.M."/>
            <person name="Rutter S."/>
            <person name="Saunders D."/>
            <person name="Seeger K."/>
            <person name="Sharp S."/>
            <person name="Skelton J."/>
            <person name="Simmonds M.N."/>
            <person name="Squares R."/>
            <person name="Squares S."/>
            <person name="Stevens K."/>
            <person name="Taylor K."/>
            <person name="Taylor R.G."/>
            <person name="Tivey A."/>
            <person name="Walsh S.V."/>
            <person name="Warren T."/>
            <person name="Whitehead S."/>
            <person name="Woodward J.R."/>
            <person name="Volckaert G."/>
            <person name="Aert R."/>
            <person name="Robben J."/>
            <person name="Grymonprez B."/>
            <person name="Weltjens I."/>
            <person name="Vanstreels E."/>
            <person name="Rieger M."/>
            <person name="Schaefer M."/>
            <person name="Mueller-Auer S."/>
            <person name="Gabel C."/>
            <person name="Fuchs M."/>
            <person name="Duesterhoeft A."/>
            <person name="Fritzc C."/>
            <person name="Holzer E."/>
            <person name="Moestl D."/>
            <person name="Hilbert H."/>
            <person name="Borzym K."/>
            <person name="Langer I."/>
            <person name="Beck A."/>
            <person name="Lehrach H."/>
            <person name="Reinhardt R."/>
            <person name="Pohl T.M."/>
            <person name="Eger P."/>
            <person name="Zimmermann W."/>
            <person name="Wedler H."/>
            <person name="Wambutt R."/>
            <person name="Purnelle B."/>
            <person name="Goffeau A."/>
            <person name="Cadieu E."/>
            <person name="Dreano S."/>
            <person name="Gloux S."/>
            <person name="Lelaure V."/>
            <person name="Mottier S."/>
            <person name="Galibert F."/>
            <person name="Aves S.J."/>
            <person name="Xiang Z."/>
            <person name="Hunt C."/>
            <person name="Moore K."/>
            <person name="Hurst S.M."/>
            <person name="Lucas M."/>
            <person name="Rochet M."/>
            <person name="Gaillardin C."/>
            <person name="Tallada V.A."/>
            <person name="Garzon A."/>
            <person name="Thode G."/>
            <person name="Daga R.R."/>
            <person name="Cruzado L."/>
            <person name="Jimenez J."/>
            <person name="Sanchez M."/>
            <person name="del Rey F."/>
            <person name="Benito J."/>
            <person name="Dominguez A."/>
            <person name="Revuelta J.L."/>
            <person name="Moreno S."/>
            <person name="Armstrong J."/>
            <person name="Forsburg S.L."/>
            <person name="Cerutti L."/>
            <person name="Lowe T."/>
            <person name="McCombie W.R."/>
            <person name="Paulsen I."/>
            <person name="Potashkin J."/>
            <person name="Shpakovski G.V."/>
            <person name="Ussery D."/>
            <person name="Barrell B.G."/>
            <person name="Nurse P."/>
        </authorList>
    </citation>
    <scope>NUCLEOTIDE SEQUENCE [LARGE SCALE GENOMIC DNA]</scope>
    <source>
        <strain>972 / ATCC 24843</strain>
    </source>
</reference>
<reference key="2">
    <citation type="journal article" date="2008" name="J. Proteome Res.">
        <title>Phosphoproteome analysis of fission yeast.</title>
        <authorList>
            <person name="Wilson-Grady J.T."/>
            <person name="Villen J."/>
            <person name="Gygi S.P."/>
        </authorList>
    </citation>
    <scope>PHOSPHORYLATION [LARGE SCALE ANALYSIS] AT SER-78</scope>
    <scope>IDENTIFICATION BY MASS SPECTROMETRY</scope>
</reference>
<reference key="3">
    <citation type="journal article" date="2001" name="Nat. Struct. Biol.">
        <title>Structure of TCTP reveals unexpected relationship with guanine nucleotide-free chaperones.</title>
        <authorList>
            <person name="Thaw P."/>
            <person name="Baxter N.J."/>
            <person name="Hounslow A.M."/>
            <person name="Price C."/>
            <person name="Waltho J.P."/>
            <person name="Craven C.J."/>
        </authorList>
    </citation>
    <scope>STRUCTURE BY NMR</scope>
</reference>
<dbReference type="EMBL" id="CU329670">
    <property type="protein sequence ID" value="CAA93806.1"/>
    <property type="molecule type" value="Genomic_DNA"/>
</dbReference>
<dbReference type="PIR" id="T38060">
    <property type="entry name" value="S67445"/>
</dbReference>
<dbReference type="RefSeq" id="NP_594328.1">
    <property type="nucleotide sequence ID" value="NM_001019749.2"/>
</dbReference>
<dbReference type="PDB" id="1H6Q">
    <property type="method" value="NMR"/>
    <property type="chains" value="A=1-168"/>
</dbReference>
<dbReference type="PDB" id="1H7Y">
    <property type="method" value="NMR"/>
    <property type="chains" value="A=1-168"/>
</dbReference>
<dbReference type="PDBsum" id="1H6Q"/>
<dbReference type="PDBsum" id="1H7Y"/>
<dbReference type="BMRB" id="Q10344"/>
<dbReference type="SMR" id="Q10344"/>
<dbReference type="BioGRID" id="278935">
    <property type="interactions" value="7"/>
</dbReference>
<dbReference type="FunCoup" id="Q10344">
    <property type="interactions" value="736"/>
</dbReference>
<dbReference type="STRING" id="284812.Q10344"/>
<dbReference type="iPTMnet" id="Q10344"/>
<dbReference type="PaxDb" id="4896-SPAC1F12.02c.1"/>
<dbReference type="EnsemblFungi" id="SPAC1F12.02c.1">
    <property type="protein sequence ID" value="SPAC1F12.02c.1:pep"/>
    <property type="gene ID" value="SPAC1F12.02c"/>
</dbReference>
<dbReference type="GeneID" id="2542475"/>
<dbReference type="KEGG" id="spo:2542475"/>
<dbReference type="PomBase" id="SPAC1F12.02c"/>
<dbReference type="VEuPathDB" id="FungiDB:SPAC1F12.02c"/>
<dbReference type="eggNOG" id="KOG1727">
    <property type="taxonomic scope" value="Eukaryota"/>
</dbReference>
<dbReference type="HOGENOM" id="CLU_095877_0_0_1"/>
<dbReference type="InParanoid" id="Q10344"/>
<dbReference type="OMA" id="CAMITEG"/>
<dbReference type="PhylomeDB" id="Q10344"/>
<dbReference type="EvolutionaryTrace" id="Q10344"/>
<dbReference type="PRO" id="PR:Q10344"/>
<dbReference type="Proteomes" id="UP000002485">
    <property type="component" value="Chromosome I"/>
</dbReference>
<dbReference type="GO" id="GO:0005737">
    <property type="term" value="C:cytoplasm"/>
    <property type="evidence" value="ECO:0000318"/>
    <property type="project" value="GO_Central"/>
</dbReference>
<dbReference type="GO" id="GO:0005829">
    <property type="term" value="C:cytosol"/>
    <property type="evidence" value="ECO:0007005"/>
    <property type="project" value="PomBase"/>
</dbReference>
<dbReference type="GO" id="GO:0005634">
    <property type="term" value="C:nucleus"/>
    <property type="evidence" value="ECO:0007005"/>
    <property type="project" value="PomBase"/>
</dbReference>
<dbReference type="GO" id="GO:0005509">
    <property type="term" value="F:calcium ion binding"/>
    <property type="evidence" value="ECO:0000318"/>
    <property type="project" value="GO_Central"/>
</dbReference>
<dbReference type="GO" id="GO:1990624">
    <property type="term" value="F:guanyl nucleotide exchange factor inhibitor activity"/>
    <property type="evidence" value="ECO:0000266"/>
    <property type="project" value="PomBase"/>
</dbReference>
<dbReference type="GO" id="GO:0002181">
    <property type="term" value="P:cytoplasmic translation"/>
    <property type="evidence" value="ECO:0000266"/>
    <property type="project" value="PomBase"/>
</dbReference>
<dbReference type="FunFam" id="2.170.150.10:FF:000002">
    <property type="entry name" value="Translationally-controlled tumor protein homolog"/>
    <property type="match status" value="1"/>
</dbReference>
<dbReference type="Gene3D" id="2.170.150.10">
    <property type="entry name" value="Metal Binding Protein, Guanine Nucleotide Exchange Factor, Chain A"/>
    <property type="match status" value="1"/>
</dbReference>
<dbReference type="InterPro" id="IPR011057">
    <property type="entry name" value="Mss4-like_sf"/>
</dbReference>
<dbReference type="InterPro" id="IPR011323">
    <property type="entry name" value="Mss4/transl-control_tumour"/>
</dbReference>
<dbReference type="InterPro" id="IPR034737">
    <property type="entry name" value="TCTP"/>
</dbReference>
<dbReference type="InterPro" id="IPR018103">
    <property type="entry name" value="Translation_control_tumour_CS"/>
</dbReference>
<dbReference type="InterPro" id="IPR018105">
    <property type="entry name" value="Translational_control_tumour_p"/>
</dbReference>
<dbReference type="PANTHER" id="PTHR11991">
    <property type="entry name" value="TRANSLATIONALLY CONTROLLED TUMOR PROTEIN-RELATED"/>
    <property type="match status" value="1"/>
</dbReference>
<dbReference type="PANTHER" id="PTHR11991:SF0">
    <property type="entry name" value="TRANSLATIONALLY-CONTROLLED TUMOR PROTEIN"/>
    <property type="match status" value="1"/>
</dbReference>
<dbReference type="Pfam" id="PF00838">
    <property type="entry name" value="TCTP"/>
    <property type="match status" value="1"/>
</dbReference>
<dbReference type="PRINTS" id="PR01653">
    <property type="entry name" value="TCTPROTEIN"/>
</dbReference>
<dbReference type="SUPFAM" id="SSF51316">
    <property type="entry name" value="Mss4-like"/>
    <property type="match status" value="1"/>
</dbReference>
<dbReference type="PROSITE" id="PS01002">
    <property type="entry name" value="TCTP_1"/>
    <property type="match status" value="1"/>
</dbReference>
<dbReference type="PROSITE" id="PS01003">
    <property type="entry name" value="TCTP_2"/>
    <property type="match status" value="1"/>
</dbReference>
<dbReference type="PROSITE" id="PS51797">
    <property type="entry name" value="TCTP_3"/>
    <property type="match status" value="1"/>
</dbReference>
<organism>
    <name type="scientific">Schizosaccharomyces pombe (strain 972 / ATCC 24843)</name>
    <name type="common">Fission yeast</name>
    <dbReference type="NCBI Taxonomy" id="284812"/>
    <lineage>
        <taxon>Eukaryota</taxon>
        <taxon>Fungi</taxon>
        <taxon>Dikarya</taxon>
        <taxon>Ascomycota</taxon>
        <taxon>Taphrinomycotina</taxon>
        <taxon>Schizosaccharomycetes</taxon>
        <taxon>Schizosaccharomycetales</taxon>
        <taxon>Schizosaccharomycetaceae</taxon>
        <taxon>Schizosaccharomyces</taxon>
    </lineage>
</organism>
<keyword id="KW-0002">3D-structure</keyword>
<keyword id="KW-0106">Calcium</keyword>
<keyword id="KW-0143">Chaperone</keyword>
<keyword id="KW-0963">Cytoplasm</keyword>
<keyword id="KW-0597">Phosphoprotein</keyword>
<keyword id="KW-1185">Reference proteome</keyword>
<name>TCTP_SCHPO</name>
<accession>Q10344</accession>
<proteinExistence type="evidence at protein level"/>
<sequence length="168" mass="19049">MLLYKDVISGDELVSDAYDLKEVDDIVYEADCQMVTVKQGGDVDIGANPSAEDAEENAEEGTETVNNLVYSFRLSPTSFDKKSYMSYIKGYMKAIKARLQESNPERVPVFEKNAIGFVKKILANFKDYDFYIGESMDPDAMVVLMNYREDGITPYMIFFKDGLVSEKF</sequence>
<comment type="function">
    <text evidence="1">Involved in calcium binding and microtubule stabilization (By similarity). May be a guanine nucleotide-free chaperone (GFC).</text>
</comment>
<comment type="subcellular location">
    <subcellularLocation>
        <location evidence="1">Cytoplasm</location>
    </subcellularLocation>
</comment>
<comment type="similarity">
    <text evidence="2">Belongs to the TCTP family.</text>
</comment>
<gene>
    <name type="primary">p23fy</name>
    <name type="ORF">SPAC1F12.02c</name>
</gene>
<evidence type="ECO:0000250" key="1"/>
<evidence type="ECO:0000255" key="2">
    <source>
        <dbReference type="PROSITE-ProRule" id="PRU01133"/>
    </source>
</evidence>
<evidence type="ECO:0000269" key="3">
    <source>
    </source>
</evidence>
<evidence type="ECO:0007829" key="4">
    <source>
        <dbReference type="PDB" id="1H6Q"/>
    </source>
</evidence>